<proteinExistence type="evidence at protein level"/>
<comment type="function">
    <text evidence="4">Heavy-metal-binding protein. Binds zinc, copper and nickel in a reversible manner.</text>
</comment>
<comment type="alternative products">
    <event type="alternative splicing"/>
    <isoform>
        <id>Q9C5D3-1</id>
        <name>1</name>
        <sequence type="displayed"/>
    </isoform>
    <isoform>
        <id>Q9C5D3-2</id>
        <name>2</name>
        <sequence type="described" ref="VSP_058570"/>
    </isoform>
    <text evidence="4">A shorter isoform might be produced by an alternative polyadenylation site usage.</text>
</comment>
<comment type="PTM">
    <text evidence="4">Efficiently farnesylated in vitro.</text>
</comment>
<comment type="similarity">
    <text evidence="8">Belongs to the HIPP family.</text>
</comment>
<comment type="sequence caution" evidence="8">
    <conflict type="miscellaneous discrepancy">
        <sequence resource="EMBL-CDS" id="AAD09507"/>
    </conflict>
</comment>
<feature type="chain" id="PRO_0000437803" description="Heavy metal-associated isoprenylated plant protein 7">
    <location>
        <begin position="1"/>
        <end position="352"/>
    </location>
</feature>
<feature type="propeptide" id="PRO_0000437804" description="Removed in mature form" evidence="8">
    <location>
        <begin position="353"/>
        <end position="355"/>
    </location>
</feature>
<feature type="domain" description="HMA 1" evidence="2">
    <location>
        <begin position="72"/>
        <end position="136"/>
    </location>
</feature>
<feature type="domain" description="HMA 2" evidence="2">
    <location>
        <begin position="170"/>
        <end position="234"/>
    </location>
</feature>
<feature type="region of interest" description="Disordered" evidence="3">
    <location>
        <begin position="1"/>
        <end position="74"/>
    </location>
</feature>
<feature type="region of interest" description="Disordered" evidence="3">
    <location>
        <begin position="132"/>
        <end position="157"/>
    </location>
</feature>
<feature type="region of interest" description="Disordered" evidence="3">
    <location>
        <begin position="235"/>
        <end position="308"/>
    </location>
</feature>
<feature type="compositionally biased region" description="Basic and acidic residues" evidence="3">
    <location>
        <begin position="1"/>
        <end position="58"/>
    </location>
</feature>
<feature type="compositionally biased region" description="Pro residues" evidence="3">
    <location>
        <begin position="63"/>
        <end position="73"/>
    </location>
</feature>
<feature type="compositionally biased region" description="Basic and acidic residues" evidence="3">
    <location>
        <begin position="254"/>
        <end position="293"/>
    </location>
</feature>
<feature type="binding site" evidence="2">
    <location>
        <position position="83"/>
    </location>
    <ligand>
        <name>a metal cation</name>
        <dbReference type="ChEBI" id="CHEBI:25213"/>
        <label>1</label>
    </ligand>
</feature>
<feature type="binding site" evidence="2">
    <location>
        <position position="86"/>
    </location>
    <ligand>
        <name>a metal cation</name>
        <dbReference type="ChEBI" id="CHEBI:25213"/>
        <label>1</label>
    </ligand>
</feature>
<feature type="binding site" evidence="2">
    <location>
        <position position="181"/>
    </location>
    <ligand>
        <name>a metal cation</name>
        <dbReference type="ChEBI" id="CHEBI:25213"/>
        <label>2</label>
    </ligand>
</feature>
<feature type="binding site" evidence="2">
    <location>
        <position position="184"/>
    </location>
    <ligand>
        <name>a metal cation</name>
        <dbReference type="ChEBI" id="CHEBI:25213"/>
        <label>2</label>
    </ligand>
</feature>
<feature type="modified residue" description="Cysteine methyl ester" evidence="1">
    <location>
        <position position="352"/>
    </location>
</feature>
<feature type="lipid moiety-binding region" description="S-farnesyl cysteine" evidence="1">
    <location>
        <position position="352"/>
    </location>
</feature>
<feature type="splice variant" id="VSP_058570" description="In isoform 2.">
    <location>
        <begin position="1"/>
        <end position="15"/>
    </location>
</feature>
<feature type="sequence conflict" description="In Ref. 4; AAD09507." evidence="8" ref="4">
    <original>EKK</original>
    <variation>GKE</variation>
    <location>
        <begin position="150"/>
        <end position="152"/>
    </location>
</feature>
<feature type="sequence conflict" description="In Ref. 4; AAD09507." evidence="8" ref="4">
    <original>E</original>
    <variation>Q</variation>
    <location>
        <position position="254"/>
    </location>
</feature>
<feature type="sequence conflict" description="In Ref. 4; AAD09507." evidence="8" ref="4">
    <original>S</original>
    <variation>F</variation>
    <location>
        <position position="267"/>
    </location>
</feature>
<reference key="1">
    <citation type="journal article" date="1997" name="DNA Res.">
        <title>Structural analysis of Arabidopsis thaliana chromosome 5. III. Sequence features of the regions of 1,191,918 bp covered by seventeen physically assigned P1 clones.</title>
        <authorList>
            <person name="Nakamura Y."/>
            <person name="Sato S."/>
            <person name="Kaneko T."/>
            <person name="Kotani H."/>
            <person name="Asamizu E."/>
            <person name="Miyajima N."/>
            <person name="Tabata S."/>
        </authorList>
    </citation>
    <scope>NUCLEOTIDE SEQUENCE [LARGE SCALE GENOMIC DNA]</scope>
    <source>
        <strain>cv. Columbia</strain>
    </source>
</reference>
<reference key="2">
    <citation type="journal article" date="2017" name="Plant J.">
        <title>Araport11: a complete reannotation of the Arabidopsis thaliana reference genome.</title>
        <authorList>
            <person name="Cheng C.Y."/>
            <person name="Krishnakumar V."/>
            <person name="Chan A.P."/>
            <person name="Thibaud-Nissen F."/>
            <person name="Schobel S."/>
            <person name="Town C.D."/>
        </authorList>
    </citation>
    <scope>GENOME REANNOTATION</scope>
    <source>
        <strain>cv. Columbia</strain>
    </source>
</reference>
<reference key="3">
    <citation type="journal article" date="2003" name="Science">
        <title>Empirical analysis of transcriptional activity in the Arabidopsis genome.</title>
        <authorList>
            <person name="Yamada K."/>
            <person name="Lim J."/>
            <person name="Dale J.M."/>
            <person name="Chen H."/>
            <person name="Shinn P."/>
            <person name="Palm C.J."/>
            <person name="Southwick A.M."/>
            <person name="Wu H.C."/>
            <person name="Kim C.J."/>
            <person name="Nguyen M."/>
            <person name="Pham P.K."/>
            <person name="Cheuk R.F."/>
            <person name="Karlin-Newmann G."/>
            <person name="Liu S.X."/>
            <person name="Lam B."/>
            <person name="Sakano H."/>
            <person name="Wu T."/>
            <person name="Yu G."/>
            <person name="Miranda M."/>
            <person name="Quach H.L."/>
            <person name="Tripp M."/>
            <person name="Chang C.H."/>
            <person name="Lee J.M."/>
            <person name="Toriumi M.J."/>
            <person name="Chan M.M."/>
            <person name="Tang C.C."/>
            <person name="Onodera C.S."/>
            <person name="Deng J.M."/>
            <person name="Akiyama K."/>
            <person name="Ansari Y."/>
            <person name="Arakawa T."/>
            <person name="Banh J."/>
            <person name="Banno F."/>
            <person name="Bowser L."/>
            <person name="Brooks S.Y."/>
            <person name="Carninci P."/>
            <person name="Chao Q."/>
            <person name="Choy N."/>
            <person name="Enju A."/>
            <person name="Goldsmith A.D."/>
            <person name="Gurjal M."/>
            <person name="Hansen N.F."/>
            <person name="Hayashizaki Y."/>
            <person name="Johnson-Hopson C."/>
            <person name="Hsuan V.W."/>
            <person name="Iida K."/>
            <person name="Karnes M."/>
            <person name="Khan S."/>
            <person name="Koesema E."/>
            <person name="Ishida J."/>
            <person name="Jiang P.X."/>
            <person name="Jones T."/>
            <person name="Kawai J."/>
            <person name="Kamiya A."/>
            <person name="Meyers C."/>
            <person name="Nakajima M."/>
            <person name="Narusaka M."/>
            <person name="Seki M."/>
            <person name="Sakurai T."/>
            <person name="Satou M."/>
            <person name="Tamse R."/>
            <person name="Vaysberg M."/>
            <person name="Wallender E.K."/>
            <person name="Wong C."/>
            <person name="Yamamura Y."/>
            <person name="Yuan S."/>
            <person name="Shinozaki K."/>
            <person name="Davis R.W."/>
            <person name="Theologis A."/>
            <person name="Ecker J.R."/>
        </authorList>
    </citation>
    <scope>NUCLEOTIDE SEQUENCE [LARGE SCALE MRNA] (ISOFORM 1)</scope>
    <source>
        <strain>cv. Columbia</strain>
    </source>
</reference>
<reference key="4">
    <citation type="journal article" date="1996" name="Mol. Biotechnol.">
        <title>Identification of cDNAs encoding isoprenylated proteins.</title>
        <authorList>
            <person name="Crowell D.N."/>
            <person name="Biermann B.J."/>
            <person name="Randall S.K."/>
        </authorList>
    </citation>
    <scope>NUCLEOTIDE SEQUENCE [MRNA] OF 60-355</scope>
</reference>
<reference key="5">
    <citation type="journal article" date="1999" name="Plant Mol. Biol.">
        <title>A new class of proteins capable of binding transition metals.</title>
        <authorList>
            <person name="Dykema P.E."/>
            <person name="Sipes P.R."/>
            <person name="Marie A."/>
            <person name="Biermann B.J."/>
            <person name="Crowell D.N."/>
            <person name="Randall S.K."/>
        </authorList>
    </citation>
    <scope>FUNCTION</scope>
    <scope>GENE FAMILY</scope>
    <scope>ALTERNATIVE PRODUCT</scope>
    <scope>ISOPRENYLATION</scope>
    <scope>METAL BINDING</scope>
</reference>
<reference key="6">
    <citation type="journal article" date="2010" name="Metallomics">
        <title>Metallochaperone-like genes in Arabidopsis thaliana.</title>
        <authorList>
            <person name="Tehseen M."/>
            <person name="Cairns N."/>
            <person name="Sherson S."/>
            <person name="Cobbett C.S."/>
        </authorList>
    </citation>
    <scope>GENE FAMILY</scope>
    <scope>NOMENCLATURE</scope>
</reference>
<reference key="7">
    <citation type="journal article" date="2013" name="FEBS J.">
        <title>Heavy metal-associated isoprenylated plant protein (HIPP): characterization of a family of proteins exclusive to plants.</title>
        <authorList>
            <person name="de Abreu-Neto J.B."/>
            <person name="Turchetto-Zolet A.C."/>
            <person name="de Oliveira L.F."/>
            <person name="Zanettini M.H."/>
            <person name="Margis-Pinheiro M."/>
        </authorList>
    </citation>
    <scope>GENE FAMILY</scope>
    <scope>NOMENCLATURE</scope>
</reference>
<keyword id="KW-0025">Alternative splicing</keyword>
<keyword id="KW-0449">Lipoprotein</keyword>
<keyword id="KW-0479">Metal-binding</keyword>
<keyword id="KW-0488">Methylation</keyword>
<keyword id="KW-0636">Prenylation</keyword>
<keyword id="KW-1185">Reference proteome</keyword>
<keyword id="KW-0677">Repeat</keyword>
<name>HIP7_ARATH</name>
<organism>
    <name type="scientific">Arabidopsis thaliana</name>
    <name type="common">Mouse-ear cress</name>
    <dbReference type="NCBI Taxonomy" id="3702"/>
    <lineage>
        <taxon>Eukaryota</taxon>
        <taxon>Viridiplantae</taxon>
        <taxon>Streptophyta</taxon>
        <taxon>Embryophyta</taxon>
        <taxon>Tracheophyta</taxon>
        <taxon>Spermatophyta</taxon>
        <taxon>Magnoliopsida</taxon>
        <taxon>eudicotyledons</taxon>
        <taxon>Gunneridae</taxon>
        <taxon>Pentapetalae</taxon>
        <taxon>rosids</taxon>
        <taxon>malvids</taxon>
        <taxon>Brassicales</taxon>
        <taxon>Brassicaceae</taxon>
        <taxon>Camelineae</taxon>
        <taxon>Arabidopsis</taxon>
    </lineage>
</organism>
<gene>
    <name evidence="5 6" type="primary">HIPP07</name>
    <name evidence="7" type="synonym">FP3</name>
    <name evidence="9" type="ordered locus">At5g63530</name>
    <name evidence="10" type="ORF">MLE2.16</name>
</gene>
<accession>Q9C5D3</accession>
<accession>Q9FMU9</accession>
<accession>Q9ZRE7</accession>
<sequence length="355" mass="39279">MGEEEKKPEAAEEKKMEEKKPEEKKEGEDKKVDAEKKGEDSDKKPQEGESNKDSKEDSAPAAPEAPAPPPPPQEVVLKVYMHCEGCARKVRRCLKGFEGVEDVMTDCKTGKVVVKGEKADPLKVLARVQRKTHRQVQLLSPIPPPPPPPEKKAEEDKPIVEEKKVEPPVVVTVVLKVHMHCEACATEIKKRIMRMKGVESAESDLKSSQVTVKGVFEPQKLVEYVYKRTGKHAAIMKIDPPPPPPPEEAAAAAEGEKKEEEKGEGESKGEEGKDDKAKTDEEKKEGDGGKGEGEAADNGGGEEEGKVVEVRKIENPYYYYYYQPPRVAIPPMEMPPHAYPPQLFSDENPNACTVM</sequence>
<protein>
    <recommendedName>
        <fullName evidence="5 6">Heavy metal-associated isoprenylated plant protein 7</fullName>
        <shortName evidence="5 6">AtHIP07</shortName>
    </recommendedName>
    <alternativeName>
        <fullName evidence="7">Farnesylated protein 3</fullName>
        <shortName evidence="7">AtFP3</shortName>
    </alternativeName>
</protein>
<evidence type="ECO:0000250" key="1">
    <source>
        <dbReference type="UniProtKB" id="Q9SZN7"/>
    </source>
</evidence>
<evidence type="ECO:0000255" key="2">
    <source>
        <dbReference type="PROSITE-ProRule" id="PRU00280"/>
    </source>
</evidence>
<evidence type="ECO:0000256" key="3">
    <source>
        <dbReference type="SAM" id="MobiDB-lite"/>
    </source>
</evidence>
<evidence type="ECO:0000269" key="4">
    <source>
    </source>
</evidence>
<evidence type="ECO:0000303" key="5">
    <source>
    </source>
</evidence>
<evidence type="ECO:0000303" key="6">
    <source>
    </source>
</evidence>
<evidence type="ECO:0000303" key="7">
    <source>
    </source>
</evidence>
<evidence type="ECO:0000305" key="8"/>
<evidence type="ECO:0000312" key="9">
    <source>
        <dbReference type="Araport" id="AT5G63530"/>
    </source>
</evidence>
<evidence type="ECO:0000312" key="10">
    <source>
        <dbReference type="EMBL" id="BAB08818.1"/>
    </source>
</evidence>
<dbReference type="EMBL" id="AB007649">
    <property type="protein sequence ID" value="BAB08818.1"/>
    <property type="molecule type" value="Genomic_DNA"/>
</dbReference>
<dbReference type="EMBL" id="CP002688">
    <property type="protein sequence ID" value="AED97763.1"/>
    <property type="molecule type" value="Genomic_DNA"/>
</dbReference>
<dbReference type="EMBL" id="CP002688">
    <property type="protein sequence ID" value="AED97764.1"/>
    <property type="molecule type" value="Genomic_DNA"/>
</dbReference>
<dbReference type="EMBL" id="AF360327">
    <property type="protein sequence ID" value="AAK26037.1"/>
    <property type="molecule type" value="mRNA"/>
</dbReference>
<dbReference type="EMBL" id="AY056337">
    <property type="protein sequence ID" value="AAL07186.1"/>
    <property type="molecule type" value="mRNA"/>
</dbReference>
<dbReference type="EMBL" id="U64906">
    <property type="protein sequence ID" value="AAD09507.1"/>
    <property type="status" value="ALT_SEQ"/>
    <property type="molecule type" value="mRNA"/>
</dbReference>
<dbReference type="RefSeq" id="NP_001078790.1">
    <molecule id="Q9C5D3-2"/>
    <property type="nucleotide sequence ID" value="NM_001085321.2"/>
</dbReference>
<dbReference type="RefSeq" id="NP_568974.1">
    <molecule id="Q9C5D3-1"/>
    <property type="nucleotide sequence ID" value="NM_125748.3"/>
</dbReference>
<dbReference type="SMR" id="Q9C5D3"/>
<dbReference type="FunCoup" id="Q9C5D3">
    <property type="interactions" value="73"/>
</dbReference>
<dbReference type="STRING" id="3702.Q9C5D3"/>
<dbReference type="PaxDb" id="3702-AT5G63530.1"/>
<dbReference type="ProteomicsDB" id="230366">
    <molecule id="Q9C5D3-1"/>
</dbReference>
<dbReference type="EnsemblPlants" id="AT5G63530.1">
    <molecule id="Q9C5D3-1"/>
    <property type="protein sequence ID" value="AT5G63530.1"/>
    <property type="gene ID" value="AT5G63530"/>
</dbReference>
<dbReference type="EnsemblPlants" id="AT5G63530.2">
    <molecule id="Q9C5D3-2"/>
    <property type="protein sequence ID" value="AT5G63530.2"/>
    <property type="gene ID" value="AT5G63530"/>
</dbReference>
<dbReference type="GeneID" id="836472"/>
<dbReference type="Gramene" id="AT5G63530.1">
    <molecule id="Q9C5D3-1"/>
    <property type="protein sequence ID" value="AT5G63530.1"/>
    <property type="gene ID" value="AT5G63530"/>
</dbReference>
<dbReference type="Gramene" id="AT5G63530.2">
    <molecule id="Q9C5D3-2"/>
    <property type="protein sequence ID" value="AT5G63530.2"/>
    <property type="gene ID" value="AT5G63530"/>
</dbReference>
<dbReference type="KEGG" id="ath:AT5G63530"/>
<dbReference type="Araport" id="AT5G63530"/>
<dbReference type="TAIR" id="AT5G63530">
    <property type="gene designation" value="FP3"/>
</dbReference>
<dbReference type="eggNOG" id="KOG1603">
    <property type="taxonomic scope" value="Eukaryota"/>
</dbReference>
<dbReference type="HOGENOM" id="CLU_039886_3_0_1"/>
<dbReference type="InParanoid" id="Q9C5D3"/>
<dbReference type="OrthoDB" id="785630at2759"/>
<dbReference type="PhylomeDB" id="Q9C5D3"/>
<dbReference type="PRO" id="PR:Q9C5D3"/>
<dbReference type="Proteomes" id="UP000006548">
    <property type="component" value="Chromosome 5"/>
</dbReference>
<dbReference type="ExpressionAtlas" id="Q9C5D3">
    <property type="expression patterns" value="baseline and differential"/>
</dbReference>
<dbReference type="GO" id="GO:0046914">
    <property type="term" value="F:transition metal ion binding"/>
    <property type="evidence" value="ECO:0000314"/>
    <property type="project" value="TAIR"/>
</dbReference>
<dbReference type="CDD" id="cd00371">
    <property type="entry name" value="HMA"/>
    <property type="match status" value="2"/>
</dbReference>
<dbReference type="FunFam" id="3.30.70.100:FF:000008">
    <property type="entry name" value="Copper transport protein ATOX1"/>
    <property type="match status" value="1"/>
</dbReference>
<dbReference type="FunFam" id="3.30.70.100:FF:000056">
    <property type="entry name" value="Heavy metal transporting ATPase"/>
    <property type="match status" value="1"/>
</dbReference>
<dbReference type="Gene3D" id="3.30.70.100">
    <property type="match status" value="2"/>
</dbReference>
<dbReference type="InterPro" id="IPR044577">
    <property type="entry name" value="HIPP4/7/8/17/18/19"/>
</dbReference>
<dbReference type="InterPro" id="IPR006121">
    <property type="entry name" value="HMA_dom"/>
</dbReference>
<dbReference type="InterPro" id="IPR036163">
    <property type="entry name" value="HMA_dom_sf"/>
</dbReference>
<dbReference type="PANTHER" id="PTHR46195">
    <property type="entry name" value="HEAVY METAL-ASSOCIATED ISOPRENYLATED PLANT PROTEIN 7"/>
    <property type="match status" value="1"/>
</dbReference>
<dbReference type="PANTHER" id="PTHR46195:SF2">
    <property type="entry name" value="HEAVY METAL-ASSOCIATED ISOPRENYLATED PLANT PROTEIN 7"/>
    <property type="match status" value="1"/>
</dbReference>
<dbReference type="Pfam" id="PF00403">
    <property type="entry name" value="HMA"/>
    <property type="match status" value="2"/>
</dbReference>
<dbReference type="SUPFAM" id="SSF55008">
    <property type="entry name" value="HMA, heavy metal-associated domain"/>
    <property type="match status" value="2"/>
</dbReference>
<dbReference type="PROSITE" id="PS50846">
    <property type="entry name" value="HMA_2"/>
    <property type="match status" value="2"/>
</dbReference>